<organism>
    <name type="scientific">Picosynechococcus sp. (strain ATCC 27264 / PCC 7002 / PR-6)</name>
    <name type="common">Agmenellum quadruplicatum</name>
    <dbReference type="NCBI Taxonomy" id="32049"/>
    <lineage>
        <taxon>Bacteria</taxon>
        <taxon>Bacillati</taxon>
        <taxon>Cyanobacteriota</taxon>
        <taxon>Cyanophyceae</taxon>
        <taxon>Oscillatoriophycideae</taxon>
        <taxon>Chroococcales</taxon>
        <taxon>Geminocystaceae</taxon>
        <taxon>Picosynechococcus</taxon>
    </lineage>
</organism>
<feature type="chain" id="PRO_1000094860" description="Deoxyribose-phosphate aldolase">
    <location>
        <begin position="1"/>
        <end position="228"/>
    </location>
</feature>
<feature type="active site" description="Proton donor/acceptor" evidence="1">
    <location>
        <position position="96"/>
    </location>
</feature>
<feature type="active site" description="Schiff-base intermediate with acetaldehyde" evidence="1">
    <location>
        <position position="157"/>
    </location>
</feature>
<feature type="active site" description="Proton donor/acceptor" evidence="1">
    <location>
        <position position="185"/>
    </location>
</feature>
<protein>
    <recommendedName>
        <fullName evidence="1">Deoxyribose-phosphate aldolase</fullName>
        <shortName evidence="1">DERA</shortName>
        <ecNumber evidence="1">4.1.2.4</ecNumber>
    </recommendedName>
    <alternativeName>
        <fullName evidence="1">2-deoxy-D-ribose 5-phosphate aldolase</fullName>
    </alternativeName>
    <alternativeName>
        <fullName evidence="1">Phosphodeoxyriboaldolase</fullName>
        <shortName evidence="1">Deoxyriboaldolase</shortName>
    </alternativeName>
</protein>
<dbReference type="EC" id="4.1.2.4" evidence="1"/>
<dbReference type="EMBL" id="CP000951">
    <property type="protein sequence ID" value="ACA98761.1"/>
    <property type="molecule type" value="Genomic_DNA"/>
</dbReference>
<dbReference type="RefSeq" id="WP_012306385.1">
    <property type="nucleotide sequence ID" value="NZ_JAHHPU010000001.1"/>
</dbReference>
<dbReference type="SMR" id="B1XI10"/>
<dbReference type="STRING" id="32049.SYNPCC7002_A0756"/>
<dbReference type="KEGG" id="syp:SYNPCC7002_A0756"/>
<dbReference type="eggNOG" id="COG0274">
    <property type="taxonomic scope" value="Bacteria"/>
</dbReference>
<dbReference type="HOGENOM" id="CLU_053595_0_2_3"/>
<dbReference type="UniPathway" id="UPA00002">
    <property type="reaction ID" value="UER00468"/>
</dbReference>
<dbReference type="Proteomes" id="UP000001688">
    <property type="component" value="Chromosome"/>
</dbReference>
<dbReference type="GO" id="GO:0005737">
    <property type="term" value="C:cytoplasm"/>
    <property type="evidence" value="ECO:0007669"/>
    <property type="project" value="UniProtKB-SubCell"/>
</dbReference>
<dbReference type="GO" id="GO:0004139">
    <property type="term" value="F:deoxyribose-phosphate aldolase activity"/>
    <property type="evidence" value="ECO:0007669"/>
    <property type="project" value="UniProtKB-UniRule"/>
</dbReference>
<dbReference type="GO" id="GO:0006018">
    <property type="term" value="P:2-deoxyribose 1-phosphate catabolic process"/>
    <property type="evidence" value="ECO:0007669"/>
    <property type="project" value="UniProtKB-UniRule"/>
</dbReference>
<dbReference type="GO" id="GO:0016052">
    <property type="term" value="P:carbohydrate catabolic process"/>
    <property type="evidence" value="ECO:0007669"/>
    <property type="project" value="TreeGrafter"/>
</dbReference>
<dbReference type="GO" id="GO:0009264">
    <property type="term" value="P:deoxyribonucleotide catabolic process"/>
    <property type="evidence" value="ECO:0007669"/>
    <property type="project" value="InterPro"/>
</dbReference>
<dbReference type="CDD" id="cd00959">
    <property type="entry name" value="DeoC"/>
    <property type="match status" value="1"/>
</dbReference>
<dbReference type="FunFam" id="3.20.20.70:FF:000044">
    <property type="entry name" value="Deoxyribose-phosphate aldolase"/>
    <property type="match status" value="1"/>
</dbReference>
<dbReference type="Gene3D" id="3.20.20.70">
    <property type="entry name" value="Aldolase class I"/>
    <property type="match status" value="1"/>
</dbReference>
<dbReference type="HAMAP" id="MF_00114">
    <property type="entry name" value="DeoC_type1"/>
    <property type="match status" value="1"/>
</dbReference>
<dbReference type="InterPro" id="IPR013785">
    <property type="entry name" value="Aldolase_TIM"/>
</dbReference>
<dbReference type="InterPro" id="IPR011343">
    <property type="entry name" value="DeoC"/>
</dbReference>
<dbReference type="InterPro" id="IPR002915">
    <property type="entry name" value="DeoC/FbaB/LacD_aldolase"/>
</dbReference>
<dbReference type="InterPro" id="IPR028581">
    <property type="entry name" value="DeoC_typeI"/>
</dbReference>
<dbReference type="NCBIfam" id="TIGR00126">
    <property type="entry name" value="deoC"/>
    <property type="match status" value="1"/>
</dbReference>
<dbReference type="PANTHER" id="PTHR10889">
    <property type="entry name" value="DEOXYRIBOSE-PHOSPHATE ALDOLASE"/>
    <property type="match status" value="1"/>
</dbReference>
<dbReference type="PANTHER" id="PTHR10889:SF1">
    <property type="entry name" value="DEOXYRIBOSE-PHOSPHATE ALDOLASE"/>
    <property type="match status" value="1"/>
</dbReference>
<dbReference type="Pfam" id="PF01791">
    <property type="entry name" value="DeoC"/>
    <property type="match status" value="1"/>
</dbReference>
<dbReference type="PIRSF" id="PIRSF001357">
    <property type="entry name" value="DeoC"/>
    <property type="match status" value="1"/>
</dbReference>
<dbReference type="SMART" id="SM01133">
    <property type="entry name" value="DeoC"/>
    <property type="match status" value="1"/>
</dbReference>
<dbReference type="SUPFAM" id="SSF51569">
    <property type="entry name" value="Aldolase"/>
    <property type="match status" value="1"/>
</dbReference>
<proteinExistence type="inferred from homology"/>
<keyword id="KW-0963">Cytoplasm</keyword>
<keyword id="KW-0456">Lyase</keyword>
<keyword id="KW-1185">Reference proteome</keyword>
<keyword id="KW-0704">Schiff base</keyword>
<sequence>MAIPANEIDLARYLEHSLLHPAATEAQVKECCEAAVQFDFPAVCLYPTAIKTARDFLHQRPIQICSVVGFPAGAHTTATKLYEAQEAVENGATELDVMLNLAFVKMGESEKLYQEVAQIVELTKVPIKGILETALLTDTEKRLAAEICLDAGVSYLKTSTGWFGGTTVADVKLLYGITKGRIGIKAAGGIKTVDQAIALIQAGATRLGTSRSIKIMQEREQVSDNPTW</sequence>
<comment type="function">
    <text evidence="1">Catalyzes a reversible aldol reaction between acetaldehyde and D-glyceraldehyde 3-phosphate to generate 2-deoxy-D-ribose 5-phosphate.</text>
</comment>
<comment type="catalytic activity">
    <reaction evidence="1">
        <text>2-deoxy-D-ribose 5-phosphate = D-glyceraldehyde 3-phosphate + acetaldehyde</text>
        <dbReference type="Rhea" id="RHEA:12821"/>
        <dbReference type="ChEBI" id="CHEBI:15343"/>
        <dbReference type="ChEBI" id="CHEBI:59776"/>
        <dbReference type="ChEBI" id="CHEBI:62877"/>
        <dbReference type="EC" id="4.1.2.4"/>
    </reaction>
</comment>
<comment type="pathway">
    <text evidence="1">Carbohydrate degradation; 2-deoxy-D-ribose 1-phosphate degradation; D-glyceraldehyde 3-phosphate and acetaldehyde from 2-deoxy-alpha-D-ribose 1-phosphate: step 2/2.</text>
</comment>
<comment type="subcellular location">
    <subcellularLocation>
        <location evidence="1">Cytoplasm</location>
    </subcellularLocation>
</comment>
<comment type="similarity">
    <text evidence="1">Belongs to the DeoC/FbaB aldolase family. DeoC type 1 subfamily.</text>
</comment>
<reference key="1">
    <citation type="submission" date="2008-02" db="EMBL/GenBank/DDBJ databases">
        <title>Complete sequence of Synechococcus sp. PCC 7002.</title>
        <authorList>
            <person name="Li T."/>
            <person name="Zhao J."/>
            <person name="Zhao C."/>
            <person name="Liu Z."/>
            <person name="Zhao F."/>
            <person name="Marquardt J."/>
            <person name="Nomura C.T."/>
            <person name="Persson S."/>
            <person name="Detter J.C."/>
            <person name="Richardson P.M."/>
            <person name="Lanz C."/>
            <person name="Schuster S.C."/>
            <person name="Wang J."/>
            <person name="Li S."/>
            <person name="Huang X."/>
            <person name="Cai T."/>
            <person name="Yu Z."/>
            <person name="Luo J."/>
            <person name="Zhao J."/>
            <person name="Bryant D.A."/>
        </authorList>
    </citation>
    <scope>NUCLEOTIDE SEQUENCE [LARGE SCALE GENOMIC DNA]</scope>
    <source>
        <strain>ATCC 27264 / PCC 7002 / PR-6</strain>
    </source>
</reference>
<name>DEOC_PICP2</name>
<accession>B1XI10</accession>
<evidence type="ECO:0000255" key="1">
    <source>
        <dbReference type="HAMAP-Rule" id="MF_00114"/>
    </source>
</evidence>
<gene>
    <name evidence="1" type="primary">deoC</name>
    <name type="ordered locus">SYNPCC7002_A0756</name>
</gene>